<organism>
    <name type="scientific">Human herpesvirus 2 (strain HG52)</name>
    <name type="common">HHV-2</name>
    <name type="synonym">Human herpes simplex virus 2</name>
    <dbReference type="NCBI Taxonomy" id="10315"/>
    <lineage>
        <taxon>Viruses</taxon>
        <taxon>Duplodnaviria</taxon>
        <taxon>Heunggongvirae</taxon>
        <taxon>Peploviricota</taxon>
        <taxon>Herviviricetes</taxon>
        <taxon>Herpesvirales</taxon>
        <taxon>Orthoherpesviridae</taxon>
        <taxon>Alphaherpesvirinae</taxon>
        <taxon>Simplexvirus</taxon>
        <taxon>Simplexvirus humanalpha2</taxon>
        <taxon>Human herpesvirus 2</taxon>
    </lineage>
</organism>
<feature type="chain" id="PRO_0000385151" description="Tegument protein UL14">
    <location>
        <begin position="1"/>
        <end position="219"/>
    </location>
</feature>
<feature type="region of interest" description="Disordered" evidence="2">
    <location>
        <begin position="159"/>
        <end position="219"/>
    </location>
</feature>
<feature type="compositionally biased region" description="Pro residues" evidence="2">
    <location>
        <begin position="186"/>
        <end position="202"/>
    </location>
</feature>
<proteinExistence type="inferred from homology"/>
<keyword id="KW-1035">Host cytoplasm</keyword>
<keyword id="KW-1048">Host nucleus</keyword>
<keyword id="KW-0597">Phosphoprotein</keyword>
<keyword id="KW-1185">Reference proteome</keyword>
<keyword id="KW-0946">Virion</keyword>
<keyword id="KW-0920">Virion tegument</keyword>
<comment type="function">
    <text evidence="1">Contributes to the nuclear transport of the viral transcriptional activator VP16 during the early phase of infection. Therefore, participates indirectly in the regulation of the immediate-early gene expression. Additionally, seems to be important for efficient nuclear targeting of capsids (By similarity).</text>
</comment>
<comment type="subcellular location">
    <subcellularLocation>
        <location evidence="1">Virion tegument</location>
    </subcellularLocation>
    <subcellularLocation>
        <location evidence="1">Host cytoplasm</location>
    </subcellularLocation>
    <subcellularLocation>
        <location evidence="1">Host nucleus</location>
    </subcellularLocation>
</comment>
<comment type="PTM">
    <text evidence="1">Phosphorylated.</text>
</comment>
<comment type="similarity">
    <text evidence="3">Belongs to the alphaherpesvirinae HHV-1 UL14 protein family.</text>
</comment>
<organismHost>
    <name type="scientific">Homo sapiens</name>
    <name type="common">Human</name>
    <dbReference type="NCBI Taxonomy" id="9606"/>
</organismHost>
<accession>P89437</accession>
<protein>
    <recommendedName>
        <fullName>Tegument protein UL14</fullName>
    </recommendedName>
</protein>
<sequence>MSRDASHAALRRRLAETHLRAEVYRDQTLQLHREGVSTQDPRFVGAFMAAKAAHLELEARLKSRARLEMMRQRATCVKIRVEEQAARRDFLTAHRRYLDPALSERLDAADDRLADQEEQLEEAAANASLWGDGDLADGWMSPGDSDLLVMWQLTSAPKVHTDAPSRPGSRPTYTPSAAGRPDAQAAPPPETAPSPEPAPGPAADPASGSGFARDCPDGE</sequence>
<evidence type="ECO:0000250" key="1"/>
<evidence type="ECO:0000256" key="2">
    <source>
        <dbReference type="SAM" id="MobiDB-lite"/>
    </source>
</evidence>
<evidence type="ECO:0000305" key="3"/>
<name>TEG3_HHV2H</name>
<gene>
    <name type="ORF">UL14</name>
</gene>
<dbReference type="EMBL" id="Z86099">
    <property type="protein sequence ID" value="CAB06774.1"/>
    <property type="molecule type" value="Genomic_DNA"/>
</dbReference>
<dbReference type="RefSeq" id="YP_009137165.1">
    <property type="nucleotide sequence ID" value="NC_001798.2"/>
</dbReference>
<dbReference type="SMR" id="P89437"/>
<dbReference type="DNASU" id="1487297"/>
<dbReference type="GeneID" id="1487297"/>
<dbReference type="KEGG" id="vg:1487297"/>
<dbReference type="Proteomes" id="UP000001874">
    <property type="component" value="Segment"/>
</dbReference>
<dbReference type="GO" id="GO:0030430">
    <property type="term" value="C:host cell cytoplasm"/>
    <property type="evidence" value="ECO:0007669"/>
    <property type="project" value="UniProtKB-SubCell"/>
</dbReference>
<dbReference type="GO" id="GO:0042025">
    <property type="term" value="C:host cell nucleus"/>
    <property type="evidence" value="ECO:0007669"/>
    <property type="project" value="UniProtKB-SubCell"/>
</dbReference>
<dbReference type="GO" id="GO:0019033">
    <property type="term" value="C:viral tegument"/>
    <property type="evidence" value="ECO:0007669"/>
    <property type="project" value="UniProtKB-SubCell"/>
</dbReference>
<dbReference type="InterPro" id="IPR005207">
    <property type="entry name" value="Herpes_UL14"/>
</dbReference>
<dbReference type="Pfam" id="PF03580">
    <property type="entry name" value="Herpes_UL14"/>
    <property type="match status" value="1"/>
</dbReference>
<reference key="1">
    <citation type="journal article" date="1998" name="J. Virol.">
        <title>The genome sequence of herpes simplex virus type 2.</title>
        <authorList>
            <person name="Dolan A."/>
            <person name="Jamieson F.E."/>
            <person name="Cunningham C."/>
            <person name="Barnett B.C."/>
            <person name="McGeoch D.J."/>
        </authorList>
    </citation>
    <scope>NUCLEOTIDE SEQUENCE [LARGE SCALE GENOMIC DNA]</scope>
</reference>